<organism>
    <name type="scientific">Marinomonas sp. (strain MWYL1)</name>
    <dbReference type="NCBI Taxonomy" id="400668"/>
    <lineage>
        <taxon>Bacteria</taxon>
        <taxon>Pseudomonadati</taxon>
        <taxon>Pseudomonadota</taxon>
        <taxon>Gammaproteobacteria</taxon>
        <taxon>Oceanospirillales</taxon>
        <taxon>Oceanospirillaceae</taxon>
        <taxon>Marinomonas</taxon>
    </lineage>
</organism>
<gene>
    <name evidence="2" type="primary">ddl</name>
    <name type="ordered locus">Mmwyl1_2612</name>
</gene>
<reference key="1">
    <citation type="submission" date="2007-06" db="EMBL/GenBank/DDBJ databases">
        <title>Complete sequence of Marinomonas sp. MWYL1.</title>
        <authorList>
            <consortium name="US DOE Joint Genome Institute"/>
            <person name="Copeland A."/>
            <person name="Lucas S."/>
            <person name="Lapidus A."/>
            <person name="Barry K."/>
            <person name="Glavina del Rio T."/>
            <person name="Dalin E."/>
            <person name="Tice H."/>
            <person name="Pitluck S."/>
            <person name="Kiss H."/>
            <person name="Brettin T."/>
            <person name="Bruce D."/>
            <person name="Detter J.C."/>
            <person name="Han C."/>
            <person name="Schmutz J."/>
            <person name="Larimer F."/>
            <person name="Land M."/>
            <person name="Hauser L."/>
            <person name="Kyrpides N."/>
            <person name="Kim E."/>
            <person name="Johnston A.W.B."/>
            <person name="Todd J.D."/>
            <person name="Rogers R."/>
            <person name="Wexler M."/>
            <person name="Bond P.L."/>
            <person name="Li Y."/>
            <person name="Richardson P."/>
        </authorList>
    </citation>
    <scope>NUCLEOTIDE SEQUENCE [LARGE SCALE GENOMIC DNA]</scope>
    <source>
        <strain>MWYL1</strain>
    </source>
</reference>
<sequence>MSKTLKESVIAVIYGGRSAEREVSLQSGPLVAEGLRAKGYQVVELDLYGSNAALDPIVQLQSIEFDLAFIALHGGEGEDGRVQALLEMFGKPYTGSSPLACGLAMDKVLTKRFWNGIGIPTPAYLSFVDHANADLIEEQMSYPVIVKPSREGSTIGINKAMNRAELDDALIKALEYDSDILVEEFIDGPEFTVTVIDDVAYPPIGLKPAPDHKLYDYEAKYIADDTEYLLPCGLDEDDENELQMLALDAYRSLGCFGWGRVDVMRDQAGVFWVLEVNTAPGMTSHSLVPMAAKYVGIDYASLVEKIAQNAWDKVGRN</sequence>
<evidence type="ECO:0000250" key="1"/>
<evidence type="ECO:0000255" key="2">
    <source>
        <dbReference type="HAMAP-Rule" id="MF_00047"/>
    </source>
</evidence>
<dbReference type="EC" id="6.3.2.4" evidence="2"/>
<dbReference type="EMBL" id="CP000749">
    <property type="protein sequence ID" value="ABR71525.1"/>
    <property type="molecule type" value="Genomic_DNA"/>
</dbReference>
<dbReference type="SMR" id="A6VYJ6"/>
<dbReference type="STRING" id="400668.Mmwyl1_2612"/>
<dbReference type="KEGG" id="mmw:Mmwyl1_2612"/>
<dbReference type="eggNOG" id="COG1181">
    <property type="taxonomic scope" value="Bacteria"/>
</dbReference>
<dbReference type="HOGENOM" id="CLU_039268_1_2_6"/>
<dbReference type="OrthoDB" id="9813261at2"/>
<dbReference type="UniPathway" id="UPA00219"/>
<dbReference type="GO" id="GO:0005829">
    <property type="term" value="C:cytosol"/>
    <property type="evidence" value="ECO:0007669"/>
    <property type="project" value="TreeGrafter"/>
</dbReference>
<dbReference type="GO" id="GO:0005524">
    <property type="term" value="F:ATP binding"/>
    <property type="evidence" value="ECO:0007669"/>
    <property type="project" value="UniProtKB-KW"/>
</dbReference>
<dbReference type="GO" id="GO:0008716">
    <property type="term" value="F:D-alanine-D-alanine ligase activity"/>
    <property type="evidence" value="ECO:0007669"/>
    <property type="project" value="UniProtKB-UniRule"/>
</dbReference>
<dbReference type="GO" id="GO:0046872">
    <property type="term" value="F:metal ion binding"/>
    <property type="evidence" value="ECO:0007669"/>
    <property type="project" value="UniProtKB-KW"/>
</dbReference>
<dbReference type="GO" id="GO:0071555">
    <property type="term" value="P:cell wall organization"/>
    <property type="evidence" value="ECO:0007669"/>
    <property type="project" value="UniProtKB-KW"/>
</dbReference>
<dbReference type="GO" id="GO:0009252">
    <property type="term" value="P:peptidoglycan biosynthetic process"/>
    <property type="evidence" value="ECO:0007669"/>
    <property type="project" value="UniProtKB-UniRule"/>
</dbReference>
<dbReference type="GO" id="GO:0008360">
    <property type="term" value="P:regulation of cell shape"/>
    <property type="evidence" value="ECO:0007669"/>
    <property type="project" value="UniProtKB-KW"/>
</dbReference>
<dbReference type="FunFam" id="3.30.470.20:FF:000008">
    <property type="entry name" value="D-alanine--D-alanine ligase"/>
    <property type="match status" value="1"/>
</dbReference>
<dbReference type="Gene3D" id="3.40.50.20">
    <property type="match status" value="1"/>
</dbReference>
<dbReference type="Gene3D" id="3.30.1490.20">
    <property type="entry name" value="ATP-grasp fold, A domain"/>
    <property type="match status" value="1"/>
</dbReference>
<dbReference type="Gene3D" id="3.30.470.20">
    <property type="entry name" value="ATP-grasp fold, B domain"/>
    <property type="match status" value="1"/>
</dbReference>
<dbReference type="HAMAP" id="MF_00047">
    <property type="entry name" value="Dala_Dala_lig"/>
    <property type="match status" value="1"/>
</dbReference>
<dbReference type="InterPro" id="IPR011761">
    <property type="entry name" value="ATP-grasp"/>
</dbReference>
<dbReference type="InterPro" id="IPR013815">
    <property type="entry name" value="ATP_grasp_subdomain_1"/>
</dbReference>
<dbReference type="InterPro" id="IPR000291">
    <property type="entry name" value="D-Ala_lig_Van_CS"/>
</dbReference>
<dbReference type="InterPro" id="IPR005905">
    <property type="entry name" value="D_ala_D_ala"/>
</dbReference>
<dbReference type="InterPro" id="IPR011095">
    <property type="entry name" value="Dala_Dala_lig_C"/>
</dbReference>
<dbReference type="InterPro" id="IPR011127">
    <property type="entry name" value="Dala_Dala_lig_N"/>
</dbReference>
<dbReference type="InterPro" id="IPR016185">
    <property type="entry name" value="PreATP-grasp_dom_sf"/>
</dbReference>
<dbReference type="NCBIfam" id="TIGR01205">
    <property type="entry name" value="D_ala_D_alaTIGR"/>
    <property type="match status" value="1"/>
</dbReference>
<dbReference type="NCBIfam" id="NF002378">
    <property type="entry name" value="PRK01372.1"/>
    <property type="match status" value="1"/>
</dbReference>
<dbReference type="PANTHER" id="PTHR23132">
    <property type="entry name" value="D-ALANINE--D-ALANINE LIGASE"/>
    <property type="match status" value="1"/>
</dbReference>
<dbReference type="PANTHER" id="PTHR23132:SF23">
    <property type="entry name" value="D-ALANINE--D-ALANINE LIGASE B"/>
    <property type="match status" value="1"/>
</dbReference>
<dbReference type="Pfam" id="PF07478">
    <property type="entry name" value="Dala_Dala_lig_C"/>
    <property type="match status" value="1"/>
</dbReference>
<dbReference type="Pfam" id="PF01820">
    <property type="entry name" value="Dala_Dala_lig_N"/>
    <property type="match status" value="1"/>
</dbReference>
<dbReference type="PIRSF" id="PIRSF039102">
    <property type="entry name" value="Ddl/VanB"/>
    <property type="match status" value="1"/>
</dbReference>
<dbReference type="SMART" id="SM01209">
    <property type="entry name" value="GARS_A"/>
    <property type="match status" value="1"/>
</dbReference>
<dbReference type="SUPFAM" id="SSF56059">
    <property type="entry name" value="Glutathione synthetase ATP-binding domain-like"/>
    <property type="match status" value="1"/>
</dbReference>
<dbReference type="SUPFAM" id="SSF52440">
    <property type="entry name" value="PreATP-grasp domain"/>
    <property type="match status" value="1"/>
</dbReference>
<dbReference type="PROSITE" id="PS50975">
    <property type="entry name" value="ATP_GRASP"/>
    <property type="match status" value="1"/>
</dbReference>
<dbReference type="PROSITE" id="PS00843">
    <property type="entry name" value="DALA_DALA_LIGASE_1"/>
    <property type="match status" value="1"/>
</dbReference>
<dbReference type="PROSITE" id="PS00844">
    <property type="entry name" value="DALA_DALA_LIGASE_2"/>
    <property type="match status" value="1"/>
</dbReference>
<feature type="chain" id="PRO_0000341130" description="D-alanine--D-alanine ligase">
    <location>
        <begin position="1"/>
        <end position="317"/>
    </location>
</feature>
<feature type="domain" description="ATP-grasp" evidence="2">
    <location>
        <begin position="111"/>
        <end position="308"/>
    </location>
</feature>
<feature type="binding site" evidence="2">
    <location>
        <begin position="137"/>
        <end position="192"/>
    </location>
    <ligand>
        <name>ATP</name>
        <dbReference type="ChEBI" id="CHEBI:30616"/>
    </ligand>
</feature>
<feature type="binding site" evidence="2">
    <location>
        <position position="262"/>
    </location>
    <ligand>
        <name>Mg(2+)</name>
        <dbReference type="ChEBI" id="CHEBI:18420"/>
        <label>1</label>
    </ligand>
</feature>
<feature type="binding site" evidence="2">
    <location>
        <position position="275"/>
    </location>
    <ligand>
        <name>Mg(2+)</name>
        <dbReference type="ChEBI" id="CHEBI:18420"/>
        <label>1</label>
    </ligand>
</feature>
<feature type="binding site" evidence="2">
    <location>
        <position position="275"/>
    </location>
    <ligand>
        <name>Mg(2+)</name>
        <dbReference type="ChEBI" id="CHEBI:18420"/>
        <label>2</label>
    </ligand>
</feature>
<feature type="binding site" evidence="2">
    <location>
        <position position="277"/>
    </location>
    <ligand>
        <name>Mg(2+)</name>
        <dbReference type="ChEBI" id="CHEBI:18420"/>
        <label>2</label>
    </ligand>
</feature>
<protein>
    <recommendedName>
        <fullName evidence="2">D-alanine--D-alanine ligase</fullName>
        <ecNumber evidence="2">6.3.2.4</ecNumber>
    </recommendedName>
    <alternativeName>
        <fullName evidence="2">D-Ala-D-Ala ligase</fullName>
    </alternativeName>
    <alternativeName>
        <fullName evidence="2">D-alanylalanine synthetase</fullName>
    </alternativeName>
</protein>
<keyword id="KW-0067">ATP-binding</keyword>
<keyword id="KW-0133">Cell shape</keyword>
<keyword id="KW-0961">Cell wall biogenesis/degradation</keyword>
<keyword id="KW-0963">Cytoplasm</keyword>
<keyword id="KW-0436">Ligase</keyword>
<keyword id="KW-0460">Magnesium</keyword>
<keyword id="KW-0464">Manganese</keyword>
<keyword id="KW-0479">Metal-binding</keyword>
<keyword id="KW-0547">Nucleotide-binding</keyword>
<keyword id="KW-0573">Peptidoglycan synthesis</keyword>
<proteinExistence type="inferred from homology"/>
<name>DDL_MARMS</name>
<comment type="function">
    <text evidence="2">Cell wall formation.</text>
</comment>
<comment type="catalytic activity">
    <reaction evidence="2">
        <text>2 D-alanine + ATP = D-alanyl-D-alanine + ADP + phosphate + H(+)</text>
        <dbReference type="Rhea" id="RHEA:11224"/>
        <dbReference type="ChEBI" id="CHEBI:15378"/>
        <dbReference type="ChEBI" id="CHEBI:30616"/>
        <dbReference type="ChEBI" id="CHEBI:43474"/>
        <dbReference type="ChEBI" id="CHEBI:57416"/>
        <dbReference type="ChEBI" id="CHEBI:57822"/>
        <dbReference type="ChEBI" id="CHEBI:456216"/>
        <dbReference type="EC" id="6.3.2.4"/>
    </reaction>
</comment>
<comment type="cofactor">
    <cofactor evidence="1">
        <name>Mg(2+)</name>
        <dbReference type="ChEBI" id="CHEBI:18420"/>
    </cofactor>
    <cofactor evidence="1">
        <name>Mn(2+)</name>
        <dbReference type="ChEBI" id="CHEBI:29035"/>
    </cofactor>
    <text evidence="1">Binds 2 magnesium or manganese ions per subunit.</text>
</comment>
<comment type="pathway">
    <text evidence="2">Cell wall biogenesis; peptidoglycan biosynthesis.</text>
</comment>
<comment type="subcellular location">
    <subcellularLocation>
        <location evidence="2">Cytoplasm</location>
    </subcellularLocation>
</comment>
<comment type="similarity">
    <text evidence="2">Belongs to the D-alanine--D-alanine ligase family.</text>
</comment>
<accession>A6VYJ6</accession>